<gene>
    <name type="primary">fmtA</name>
    <name type="synonym">fmt</name>
    <name type="ordered locus">SAOUHSC_00998</name>
</gene>
<protein>
    <recommendedName>
        <fullName evidence="6">Teichoic acid D-alanine hydrolase</fullName>
        <ecNumber evidence="2">3.1.1.103</ecNumber>
    </recommendedName>
    <alternativeName>
        <fullName evidence="6">Teichoic acid D-alanine esterase</fullName>
    </alternativeName>
</protein>
<evidence type="ECO:0000250" key="1"/>
<evidence type="ECO:0000250" key="2">
    <source>
        <dbReference type="UniProtKB" id="Q7A2T0"/>
    </source>
</evidence>
<evidence type="ECO:0000255" key="3"/>
<evidence type="ECO:0000269" key="4">
    <source>
    </source>
</evidence>
<evidence type="ECO:0000269" key="5">
    <source>
    </source>
</evidence>
<evidence type="ECO:0000305" key="6"/>
<comment type="function">
    <text evidence="2 4 5">Catalyzes the liberation of D-alanyl moieties present on wall teichoic acid (WTA) and lipoteichoic acid (LTA) (By similarity). Affects the methicillin resistance level and autolysis in the presence of Triton X-100 as well as the cell wall structure (PubMed:10471551, PubMed:9371333).</text>
</comment>
<comment type="catalytic activity">
    <reaction evidence="2">
        <text>[(4-D-Ala)-(2-GlcNAc)-Rib-ol-P]n-[Gro-P]m-beta-D-ManNAc-(1-&gt;4)-alpha-D-GlcNAc-P-peptidoglycan + n H2O = [(2-GlcNAc)-Rib-ol-P]n-[Gro-P]m-beta-D-ManNAc-(1-&gt;4)-alpha-D-GlcNAc-P-peptidoglycan + n D-alanine.</text>
        <dbReference type="EC" id="3.1.1.103"/>
    </reaction>
</comment>
<comment type="subcellular location">
    <subcellularLocation>
        <location evidence="1">Cell membrane</location>
        <topology evidence="1">Peripheral membrane protein</topology>
    </subcellularLocation>
</comment>
<comment type="induction">
    <text>Transcription is dose dependently increased by the addition of beta-lactam antibiotics, fosfomycin, and bacitracin.</text>
</comment>
<comment type="miscellaneous">
    <text>Inactivation of fmtA results in reduction of the methicillin resistance and in a modification of the cell wall structure.</text>
</comment>
<accession>Q2FZK3</accession>
<proteinExistence type="evidence at transcript level"/>
<keyword id="KW-0046">Antibiotic resistance</keyword>
<keyword id="KW-1003">Cell membrane</keyword>
<keyword id="KW-0961">Cell wall biogenesis/degradation</keyword>
<keyword id="KW-0378">Hydrolase</keyword>
<keyword id="KW-0472">Membrane</keyword>
<keyword id="KW-1185">Reference proteome</keyword>
<keyword id="KW-0732">Signal</keyword>
<sequence length="397" mass="46067">MKFNKVKLVIHACVLLFIIISIALIFHRLQTKTHSIDPIHKETKLSDNEKYLVDRNKEKVAPSKLKEVYNSKDPKYKKIDKYLQSSLFNGSVAIYENGKLKMSKGYGYQDFEKGIKNTPNTMFLIGSAQKFSTGLLLKQLEEEHKININDPVSKYLPWFKTSKPIPLKDLMLHQSGLYKYKSSKDYKNLDQAVKAIQKRGIDPKKYKKHMYNDGNYLVLAKVIEEVTGKSYAENYYTKIGDPLKLQHTAFYDEQPFKKYLAKGYAYNSTGLSFLRPNILDQYYGAGNLYMTPTDMGKLITQIQQYKLFSPKITNPLLHEFGTKKYPDEYRYGFYAKPTLNRLNGGFFGQVFTVYYNDKYVVVLALNVKGNNEVRIKHIYNDILKQNKPYNTKGVIVQ</sequence>
<feature type="signal peptide" evidence="3">
    <location>
        <begin position="1"/>
        <end position="23"/>
    </location>
</feature>
<feature type="chain" id="PRO_0000248948" description="Teichoic acid D-alanine hydrolase">
    <location>
        <begin position="24"/>
        <end position="397"/>
    </location>
</feature>
<name>FMTA_STAA8</name>
<reference key="1">
    <citation type="book" date="2006" name="Gram positive pathogens, 2nd edition">
        <title>The Staphylococcus aureus NCTC 8325 genome.</title>
        <editorList>
            <person name="Fischetti V."/>
            <person name="Novick R."/>
            <person name="Ferretti J."/>
            <person name="Portnoy D."/>
            <person name="Rood J."/>
        </editorList>
        <authorList>
            <person name="Gillaspy A.F."/>
            <person name="Worrell V."/>
            <person name="Orvis J."/>
            <person name="Roe B.A."/>
            <person name="Dyer D.W."/>
            <person name="Iandolo J.J."/>
        </authorList>
    </citation>
    <scope>NUCLEOTIDE SEQUENCE [LARGE SCALE GENOMIC DNA]</scope>
    <source>
        <strain>NCTC 8325 / PS 47</strain>
    </source>
</reference>
<reference key="2">
    <citation type="journal article" date="1997" name="Antimicrob. Agents Chemother.">
        <title>Cloning and characterization of the fmt gene which affects the methicillin resistance level and autolysis in the presence of triton X-100 in methicillin-resistant Staphylococcus aureus.</title>
        <authorList>
            <person name="Komatsuzawa H."/>
            <person name="Sugai M."/>
            <person name="Ohta K."/>
            <person name="Fujiwara T."/>
            <person name="Nakashima S."/>
            <person name="Suzuki J."/>
            <person name="Lee C.Y."/>
            <person name="Suginaka H."/>
        </authorList>
    </citation>
    <scope>FUNCTION</scope>
</reference>
<reference key="3">
    <citation type="journal article" date="1999" name="Antimicrob. Agents Chemother.">
        <title>Characterization of fmtA, a gene that modulates the expression of methicillin resistance in Staphylococcus aureus.</title>
        <authorList>
            <person name="Komatsuzawa H."/>
            <person name="Ohta K."/>
            <person name="Labischinski H."/>
            <person name="Sugai M."/>
            <person name="Suginaka H."/>
        </authorList>
    </citation>
    <scope>FUNCTION</scope>
</reference>
<dbReference type="EC" id="3.1.1.103" evidence="2"/>
<dbReference type="EMBL" id="CP000253">
    <property type="protein sequence ID" value="ABD30122.1"/>
    <property type="molecule type" value="Genomic_DNA"/>
</dbReference>
<dbReference type="RefSeq" id="WP_000671243.1">
    <property type="nucleotide sequence ID" value="NZ_LS483365.1"/>
</dbReference>
<dbReference type="RefSeq" id="YP_499550.1">
    <property type="nucleotide sequence ID" value="NC_007795.1"/>
</dbReference>
<dbReference type="SMR" id="Q2FZK3"/>
<dbReference type="STRING" id="93061.SAOUHSC_00998"/>
<dbReference type="MEROPS" id="S12.006"/>
<dbReference type="PaxDb" id="1280-SAXN108_1054"/>
<dbReference type="GeneID" id="3920398"/>
<dbReference type="KEGG" id="sao:SAOUHSC_00998"/>
<dbReference type="PATRIC" id="fig|93061.5.peg.916"/>
<dbReference type="eggNOG" id="COG1680">
    <property type="taxonomic scope" value="Bacteria"/>
</dbReference>
<dbReference type="HOGENOM" id="CLU_020027_0_0_9"/>
<dbReference type="OrthoDB" id="9803467at2"/>
<dbReference type="PRO" id="PR:Q2FZK3"/>
<dbReference type="Proteomes" id="UP000008816">
    <property type="component" value="Chromosome"/>
</dbReference>
<dbReference type="GO" id="GO:0005886">
    <property type="term" value="C:plasma membrane"/>
    <property type="evidence" value="ECO:0007669"/>
    <property type="project" value="UniProtKB-SubCell"/>
</dbReference>
<dbReference type="GO" id="GO:0016787">
    <property type="term" value="F:hydrolase activity"/>
    <property type="evidence" value="ECO:0007669"/>
    <property type="project" value="UniProtKB-KW"/>
</dbReference>
<dbReference type="GO" id="GO:0071555">
    <property type="term" value="P:cell wall organization"/>
    <property type="evidence" value="ECO:0007669"/>
    <property type="project" value="UniProtKB-KW"/>
</dbReference>
<dbReference type="GO" id="GO:0046677">
    <property type="term" value="P:response to antibiotic"/>
    <property type="evidence" value="ECO:0007669"/>
    <property type="project" value="UniProtKB-KW"/>
</dbReference>
<dbReference type="FunFam" id="3.40.710.10:FF:000040">
    <property type="entry name" value="Methicillin resistance protein FmtA"/>
    <property type="match status" value="1"/>
</dbReference>
<dbReference type="Gene3D" id="3.40.710.10">
    <property type="entry name" value="DD-peptidase/beta-lactamase superfamily"/>
    <property type="match status" value="1"/>
</dbReference>
<dbReference type="InterPro" id="IPR050491">
    <property type="entry name" value="Bact_CellWall_Synth/Modif"/>
</dbReference>
<dbReference type="InterPro" id="IPR001466">
    <property type="entry name" value="Beta-lactam-related"/>
</dbReference>
<dbReference type="InterPro" id="IPR012338">
    <property type="entry name" value="Beta-lactam/transpept-like"/>
</dbReference>
<dbReference type="PANTHER" id="PTHR46825">
    <property type="entry name" value="D-ALANYL-D-ALANINE-CARBOXYPEPTIDASE/ENDOPEPTIDASE AMPH"/>
    <property type="match status" value="1"/>
</dbReference>
<dbReference type="PANTHER" id="PTHR46825:SF11">
    <property type="entry name" value="PENICILLIN-BINDING PROTEIN 4"/>
    <property type="match status" value="1"/>
</dbReference>
<dbReference type="Pfam" id="PF00144">
    <property type="entry name" value="Beta-lactamase"/>
    <property type="match status" value="1"/>
</dbReference>
<dbReference type="SUPFAM" id="SSF56601">
    <property type="entry name" value="beta-lactamase/transpeptidase-like"/>
    <property type="match status" value="1"/>
</dbReference>
<organism>
    <name type="scientific">Staphylococcus aureus (strain NCTC 8325 / PS 47)</name>
    <dbReference type="NCBI Taxonomy" id="93061"/>
    <lineage>
        <taxon>Bacteria</taxon>
        <taxon>Bacillati</taxon>
        <taxon>Bacillota</taxon>
        <taxon>Bacilli</taxon>
        <taxon>Bacillales</taxon>
        <taxon>Staphylococcaceae</taxon>
        <taxon>Staphylococcus</taxon>
    </lineage>
</organism>